<name>MSD6_AMAPH</name>
<sequence length="33" mass="3497">MSDINATRLPLILLAALGIPSDDADSTLTRGER</sequence>
<comment type="function">
    <text evidence="4">Probable toxin that belongs to the MSDIN-like toxin family responsible for a large number of food poisoning cases and deaths (PubMed:24613547).</text>
</comment>
<comment type="PTM">
    <text evidence="1">Processed by the macrocyclase-peptidase enzyme POPB to yield a toxic cyclic decapeptide (By similarity). POPB first removes 10 residues from the N-terminus (By similarity). Conformational trapping of the remaining peptide forces the enzyme to release this intermediate rather than proceed to macrocyclization (By similarity). The enzyme rebinds the remaining peptide in a different conformation and catalyzes macrocyclization of the N-terminal 10 residues (By similarity).</text>
</comment>
<comment type="similarity">
    <text evidence="3">Belongs to the MSDIN fungal toxin family.</text>
</comment>
<accession>A0A023IWG2</accession>
<dbReference type="EMBL" id="KF552084">
    <property type="protein sequence ID" value="AHB18712.1"/>
    <property type="molecule type" value="Genomic_DNA"/>
</dbReference>
<dbReference type="GO" id="GO:0090729">
    <property type="term" value="F:toxin activity"/>
    <property type="evidence" value="ECO:0007669"/>
    <property type="project" value="UniProtKB-KW"/>
</dbReference>
<dbReference type="InterPro" id="IPR027582">
    <property type="entry name" value="Amanitin/phalloidin"/>
</dbReference>
<dbReference type="NCBIfam" id="TIGR04309">
    <property type="entry name" value="amanitin"/>
    <property type="match status" value="1"/>
</dbReference>
<reference key="1">
    <citation type="journal article" date="2014" name="Toxicon">
        <title>The molecular diversity of toxin gene families in lethal Amanita mushrooms.</title>
        <authorList>
            <person name="Li P."/>
            <person name="Deng W."/>
            <person name="Li T."/>
        </authorList>
    </citation>
    <scope>NUCLEOTIDE SEQUENCE [GENOMIC DNA]</scope>
    <scope>FUNCTION</scope>
</reference>
<protein>
    <recommendedName>
        <fullName evidence="2">MSDIN-like toxin proprotein 6</fullName>
    </recommendedName>
    <component>
        <recommendedName>
            <fullName evidence="4">Toxin MSD6</fullName>
        </recommendedName>
    </component>
</protein>
<organism>
    <name type="scientific">Amanita phalloides</name>
    <name type="common">Death cap</name>
    <dbReference type="NCBI Taxonomy" id="67723"/>
    <lineage>
        <taxon>Eukaryota</taxon>
        <taxon>Fungi</taxon>
        <taxon>Dikarya</taxon>
        <taxon>Basidiomycota</taxon>
        <taxon>Agaricomycotina</taxon>
        <taxon>Agaricomycetes</taxon>
        <taxon>Agaricomycetidae</taxon>
        <taxon>Agaricales</taxon>
        <taxon>Pluteineae</taxon>
        <taxon>Amanitaceae</taxon>
        <taxon>Amanita</taxon>
    </lineage>
</organism>
<feature type="propeptide" id="PRO_0000443686" evidence="4">
    <location>
        <begin position="1"/>
        <end position="10"/>
    </location>
</feature>
<feature type="peptide" id="PRO_0000443687" description="Toxin MSD6" evidence="4">
    <location>
        <begin position="11"/>
        <end position="20"/>
    </location>
</feature>
<feature type="propeptide" id="PRO_0000443688" evidence="4">
    <location>
        <begin position="21"/>
        <end position="33"/>
    </location>
</feature>
<feature type="cross-link" description="Cyclopeptide (Leu-Pro)" evidence="4">
    <location>
        <begin position="11"/>
        <end position="20"/>
    </location>
</feature>
<keyword id="KW-0800">Toxin</keyword>
<proteinExistence type="inferred from homology"/>
<evidence type="ECO:0000250" key="1">
    <source>
        <dbReference type="UniProtKB" id="A0A067SLB9"/>
    </source>
</evidence>
<evidence type="ECO:0000303" key="2">
    <source>
    </source>
</evidence>
<evidence type="ECO:0000305" key="3"/>
<evidence type="ECO:0000305" key="4">
    <source>
    </source>
</evidence>